<feature type="chain" id="PRO_1000143021" description="Large ribosomal subunit protein uL16">
    <location>
        <begin position="1"/>
        <end position="136"/>
    </location>
</feature>
<reference key="1">
    <citation type="journal article" date="2011" name="J. Bacteriol.">
        <title>Comparative genomics of 28 Salmonella enterica isolates: evidence for CRISPR-mediated adaptive sublineage evolution.</title>
        <authorList>
            <person name="Fricke W.F."/>
            <person name="Mammel M.K."/>
            <person name="McDermott P.F."/>
            <person name="Tartera C."/>
            <person name="White D.G."/>
            <person name="Leclerc J.E."/>
            <person name="Ravel J."/>
            <person name="Cebula T.A."/>
        </authorList>
    </citation>
    <scope>NUCLEOTIDE SEQUENCE [LARGE SCALE GENOMIC DNA]</scope>
    <source>
        <strain>CT_02021853</strain>
    </source>
</reference>
<gene>
    <name evidence="1" type="primary">rplP</name>
    <name type="ordered locus">SeD_A3800</name>
</gene>
<dbReference type="EMBL" id="CP001144">
    <property type="protein sequence ID" value="ACH77255.1"/>
    <property type="molecule type" value="Genomic_DNA"/>
</dbReference>
<dbReference type="RefSeq" id="WP_000941208.1">
    <property type="nucleotide sequence ID" value="NC_011205.1"/>
</dbReference>
<dbReference type="SMR" id="B5FJK7"/>
<dbReference type="GeneID" id="93035738"/>
<dbReference type="KEGG" id="sed:SeD_A3800"/>
<dbReference type="HOGENOM" id="CLU_078858_2_1_6"/>
<dbReference type="Proteomes" id="UP000008322">
    <property type="component" value="Chromosome"/>
</dbReference>
<dbReference type="GO" id="GO:0022625">
    <property type="term" value="C:cytosolic large ribosomal subunit"/>
    <property type="evidence" value="ECO:0007669"/>
    <property type="project" value="TreeGrafter"/>
</dbReference>
<dbReference type="GO" id="GO:0019843">
    <property type="term" value="F:rRNA binding"/>
    <property type="evidence" value="ECO:0007669"/>
    <property type="project" value="UniProtKB-UniRule"/>
</dbReference>
<dbReference type="GO" id="GO:0003735">
    <property type="term" value="F:structural constituent of ribosome"/>
    <property type="evidence" value="ECO:0007669"/>
    <property type="project" value="InterPro"/>
</dbReference>
<dbReference type="GO" id="GO:0000049">
    <property type="term" value="F:tRNA binding"/>
    <property type="evidence" value="ECO:0007669"/>
    <property type="project" value="UniProtKB-KW"/>
</dbReference>
<dbReference type="GO" id="GO:0006412">
    <property type="term" value="P:translation"/>
    <property type="evidence" value="ECO:0007669"/>
    <property type="project" value="UniProtKB-UniRule"/>
</dbReference>
<dbReference type="CDD" id="cd01433">
    <property type="entry name" value="Ribosomal_L16_L10e"/>
    <property type="match status" value="1"/>
</dbReference>
<dbReference type="FunFam" id="3.90.1170.10:FF:000001">
    <property type="entry name" value="50S ribosomal protein L16"/>
    <property type="match status" value="1"/>
</dbReference>
<dbReference type="Gene3D" id="3.90.1170.10">
    <property type="entry name" value="Ribosomal protein L10e/L16"/>
    <property type="match status" value="1"/>
</dbReference>
<dbReference type="HAMAP" id="MF_01342">
    <property type="entry name" value="Ribosomal_uL16"/>
    <property type="match status" value="1"/>
</dbReference>
<dbReference type="InterPro" id="IPR047873">
    <property type="entry name" value="Ribosomal_uL16"/>
</dbReference>
<dbReference type="InterPro" id="IPR000114">
    <property type="entry name" value="Ribosomal_uL16_bact-type"/>
</dbReference>
<dbReference type="InterPro" id="IPR020798">
    <property type="entry name" value="Ribosomal_uL16_CS"/>
</dbReference>
<dbReference type="InterPro" id="IPR016180">
    <property type="entry name" value="Ribosomal_uL16_dom"/>
</dbReference>
<dbReference type="InterPro" id="IPR036920">
    <property type="entry name" value="Ribosomal_uL16_sf"/>
</dbReference>
<dbReference type="NCBIfam" id="TIGR01164">
    <property type="entry name" value="rplP_bact"/>
    <property type="match status" value="1"/>
</dbReference>
<dbReference type="PANTHER" id="PTHR12220">
    <property type="entry name" value="50S/60S RIBOSOMAL PROTEIN L16"/>
    <property type="match status" value="1"/>
</dbReference>
<dbReference type="PANTHER" id="PTHR12220:SF13">
    <property type="entry name" value="LARGE RIBOSOMAL SUBUNIT PROTEIN UL16M"/>
    <property type="match status" value="1"/>
</dbReference>
<dbReference type="Pfam" id="PF00252">
    <property type="entry name" value="Ribosomal_L16"/>
    <property type="match status" value="1"/>
</dbReference>
<dbReference type="PRINTS" id="PR00060">
    <property type="entry name" value="RIBOSOMALL16"/>
</dbReference>
<dbReference type="SUPFAM" id="SSF54686">
    <property type="entry name" value="Ribosomal protein L16p/L10e"/>
    <property type="match status" value="1"/>
</dbReference>
<dbReference type="PROSITE" id="PS00586">
    <property type="entry name" value="RIBOSOMAL_L16_1"/>
    <property type="match status" value="1"/>
</dbReference>
<dbReference type="PROSITE" id="PS00701">
    <property type="entry name" value="RIBOSOMAL_L16_2"/>
    <property type="match status" value="1"/>
</dbReference>
<name>RL16_SALDC</name>
<organism>
    <name type="scientific">Salmonella dublin (strain CT_02021853)</name>
    <dbReference type="NCBI Taxonomy" id="439851"/>
    <lineage>
        <taxon>Bacteria</taxon>
        <taxon>Pseudomonadati</taxon>
        <taxon>Pseudomonadota</taxon>
        <taxon>Gammaproteobacteria</taxon>
        <taxon>Enterobacterales</taxon>
        <taxon>Enterobacteriaceae</taxon>
        <taxon>Salmonella</taxon>
    </lineage>
</organism>
<comment type="function">
    <text evidence="1">Binds 23S rRNA and is also seen to make contacts with the A and possibly P site tRNAs.</text>
</comment>
<comment type="subunit">
    <text evidence="1">Part of the 50S ribosomal subunit.</text>
</comment>
<comment type="similarity">
    <text evidence="1">Belongs to the universal ribosomal protein uL16 family.</text>
</comment>
<protein>
    <recommendedName>
        <fullName evidence="1">Large ribosomal subunit protein uL16</fullName>
    </recommendedName>
    <alternativeName>
        <fullName evidence="2">50S ribosomal protein L16</fullName>
    </alternativeName>
</protein>
<accession>B5FJK7</accession>
<proteinExistence type="inferred from homology"/>
<evidence type="ECO:0000255" key="1">
    <source>
        <dbReference type="HAMAP-Rule" id="MF_01342"/>
    </source>
</evidence>
<evidence type="ECO:0000305" key="2"/>
<sequence length="136" mass="15194">MLQPKRTKFRKMHKGRNRGLAAGADVSFGSFGLKAVGRGRLTARQIEAARRAMTRAVKRQGKIWIRVFPDKPITEKPLAVRMGKGKGNVEYWVALIQPGKVLYEMDGVPEELAREAFKLAAAKLPIKTTFVTKTVM</sequence>
<keyword id="KW-0687">Ribonucleoprotein</keyword>
<keyword id="KW-0689">Ribosomal protein</keyword>
<keyword id="KW-0694">RNA-binding</keyword>
<keyword id="KW-0699">rRNA-binding</keyword>
<keyword id="KW-0820">tRNA-binding</keyword>